<protein>
    <recommendedName>
        <fullName evidence="1">Energy-coupling factor transporter ATP-binding protein EcfA1</fullName>
        <shortName evidence="1">ECF transporter A component EcfA1</shortName>
        <ecNumber evidence="1">7.-.-.-</ecNumber>
    </recommendedName>
</protein>
<dbReference type="EC" id="7.-.-.-" evidence="1"/>
<dbReference type="EMBL" id="CP000033">
    <property type="protein sequence ID" value="AAV42211.1"/>
    <property type="molecule type" value="Genomic_DNA"/>
</dbReference>
<dbReference type="RefSeq" id="WP_003549050.1">
    <property type="nucleotide sequence ID" value="NC_006814.3"/>
</dbReference>
<dbReference type="RefSeq" id="YP_193242.1">
    <property type="nucleotide sequence ID" value="NC_006814.3"/>
</dbReference>
<dbReference type="SMR" id="Q5FM63"/>
<dbReference type="STRING" id="272621.LBA0319"/>
<dbReference type="KEGG" id="lac:LBA0319"/>
<dbReference type="PATRIC" id="fig|272621.13.peg.305"/>
<dbReference type="eggNOG" id="COG1122">
    <property type="taxonomic scope" value="Bacteria"/>
</dbReference>
<dbReference type="HOGENOM" id="CLU_000604_1_22_9"/>
<dbReference type="OrthoDB" id="9784332at2"/>
<dbReference type="BioCyc" id="LACI272621:G1G49-313-MONOMER"/>
<dbReference type="Proteomes" id="UP000006381">
    <property type="component" value="Chromosome"/>
</dbReference>
<dbReference type="GO" id="GO:0043190">
    <property type="term" value="C:ATP-binding cassette (ABC) transporter complex"/>
    <property type="evidence" value="ECO:0007669"/>
    <property type="project" value="TreeGrafter"/>
</dbReference>
<dbReference type="GO" id="GO:0005524">
    <property type="term" value="F:ATP binding"/>
    <property type="evidence" value="ECO:0007669"/>
    <property type="project" value="UniProtKB-KW"/>
</dbReference>
<dbReference type="GO" id="GO:0016887">
    <property type="term" value="F:ATP hydrolysis activity"/>
    <property type="evidence" value="ECO:0007669"/>
    <property type="project" value="InterPro"/>
</dbReference>
<dbReference type="GO" id="GO:0042626">
    <property type="term" value="F:ATPase-coupled transmembrane transporter activity"/>
    <property type="evidence" value="ECO:0007669"/>
    <property type="project" value="TreeGrafter"/>
</dbReference>
<dbReference type="CDD" id="cd03225">
    <property type="entry name" value="ABC_cobalt_CbiO_domain1"/>
    <property type="match status" value="1"/>
</dbReference>
<dbReference type="FunFam" id="3.40.50.300:FF:000224">
    <property type="entry name" value="Energy-coupling factor transporter ATP-binding protein EcfA"/>
    <property type="match status" value="1"/>
</dbReference>
<dbReference type="Gene3D" id="3.40.50.300">
    <property type="entry name" value="P-loop containing nucleotide triphosphate hydrolases"/>
    <property type="match status" value="1"/>
</dbReference>
<dbReference type="InterPro" id="IPR003593">
    <property type="entry name" value="AAA+_ATPase"/>
</dbReference>
<dbReference type="InterPro" id="IPR003439">
    <property type="entry name" value="ABC_transporter-like_ATP-bd"/>
</dbReference>
<dbReference type="InterPro" id="IPR017871">
    <property type="entry name" value="ABC_transporter-like_CS"/>
</dbReference>
<dbReference type="InterPro" id="IPR015856">
    <property type="entry name" value="ABC_transpr_CbiO/EcfA_su"/>
</dbReference>
<dbReference type="InterPro" id="IPR050095">
    <property type="entry name" value="ECF_ABC_transporter_ATP-bd"/>
</dbReference>
<dbReference type="InterPro" id="IPR030947">
    <property type="entry name" value="EcfA_1"/>
</dbReference>
<dbReference type="InterPro" id="IPR027417">
    <property type="entry name" value="P-loop_NTPase"/>
</dbReference>
<dbReference type="NCBIfam" id="TIGR04520">
    <property type="entry name" value="ECF_ATPase_1"/>
    <property type="match status" value="1"/>
</dbReference>
<dbReference type="NCBIfam" id="NF010167">
    <property type="entry name" value="PRK13648.1"/>
    <property type="match status" value="1"/>
</dbReference>
<dbReference type="PANTHER" id="PTHR43553:SF24">
    <property type="entry name" value="ENERGY-COUPLING FACTOR TRANSPORTER ATP-BINDING PROTEIN ECFA1"/>
    <property type="match status" value="1"/>
</dbReference>
<dbReference type="PANTHER" id="PTHR43553">
    <property type="entry name" value="HEAVY METAL TRANSPORTER"/>
    <property type="match status" value="1"/>
</dbReference>
<dbReference type="Pfam" id="PF00005">
    <property type="entry name" value="ABC_tran"/>
    <property type="match status" value="1"/>
</dbReference>
<dbReference type="SMART" id="SM00382">
    <property type="entry name" value="AAA"/>
    <property type="match status" value="1"/>
</dbReference>
<dbReference type="SUPFAM" id="SSF52540">
    <property type="entry name" value="P-loop containing nucleoside triphosphate hydrolases"/>
    <property type="match status" value="1"/>
</dbReference>
<dbReference type="PROSITE" id="PS00211">
    <property type="entry name" value="ABC_TRANSPORTER_1"/>
    <property type="match status" value="1"/>
</dbReference>
<dbReference type="PROSITE" id="PS50893">
    <property type="entry name" value="ABC_TRANSPORTER_2"/>
    <property type="match status" value="1"/>
</dbReference>
<dbReference type="PROSITE" id="PS51246">
    <property type="entry name" value="CBIO"/>
    <property type="match status" value="1"/>
</dbReference>
<gene>
    <name evidence="1" type="primary">ecfA1</name>
    <name type="synonym">cbiO1</name>
    <name type="ordered locus">LBA0319</name>
</gene>
<accession>Q5FM63</accession>
<keyword id="KW-0067">ATP-binding</keyword>
<keyword id="KW-1003">Cell membrane</keyword>
<keyword id="KW-0472">Membrane</keyword>
<keyword id="KW-0547">Nucleotide-binding</keyword>
<keyword id="KW-1185">Reference proteome</keyword>
<keyword id="KW-1278">Translocase</keyword>
<keyword id="KW-0813">Transport</keyword>
<comment type="function">
    <text evidence="1">ATP-binding (A) component of a common energy-coupling factor (ECF) ABC-transporter complex. Unlike classic ABC transporters this ECF transporter provides the energy necessary to transport a number of different substrates.</text>
</comment>
<comment type="subunit">
    <text evidence="1">Forms a stable energy-coupling factor (ECF) transporter complex composed of 2 membrane-embedded substrate-binding proteins (S component), 2 ATP-binding proteins (A component) and 2 transmembrane proteins (T component).</text>
</comment>
<comment type="subcellular location">
    <subcellularLocation>
        <location evidence="1">Cell membrane</location>
        <topology evidence="1">Peripheral membrane protein</topology>
    </subcellularLocation>
</comment>
<comment type="similarity">
    <text evidence="1">Belongs to the ABC transporter superfamily. Energy-coupling factor EcfA family.</text>
</comment>
<evidence type="ECO:0000255" key="1">
    <source>
        <dbReference type="HAMAP-Rule" id="MF_01710"/>
    </source>
</evidence>
<sequence>MSKNNAVEFRHVSFTYPDTEKPVLNDINFKIRSGSWTALIGHNGSGKSTISKLTNGLLLPDADANSKIIVSGITLNSKTVWNVREKVGIVFQNPDNQFVGATVGDDVAFGLENRGVPRNEMIRIVNRVLSDVGMLDYINAEPANLSGGQKQRVAIAGILAVEPDIIILDESTSMLDPNGRNQILKIIRQLMIDKNLTIISITHDIDEASLADDVIVLNDGKILAQSGPIDIFSKPELLQEIGLDIPFVEKVILKLKETGIKVPQSIKTQDELEQYLCQLNSKK</sequence>
<name>ECFA1_LACAC</name>
<organism>
    <name type="scientific">Lactobacillus acidophilus (strain ATCC 700396 / NCK56 / N2 / NCFM)</name>
    <dbReference type="NCBI Taxonomy" id="272621"/>
    <lineage>
        <taxon>Bacteria</taxon>
        <taxon>Bacillati</taxon>
        <taxon>Bacillota</taxon>
        <taxon>Bacilli</taxon>
        <taxon>Lactobacillales</taxon>
        <taxon>Lactobacillaceae</taxon>
        <taxon>Lactobacillus</taxon>
    </lineage>
</organism>
<feature type="chain" id="PRO_0000287941" description="Energy-coupling factor transporter ATP-binding protein EcfA1">
    <location>
        <begin position="1"/>
        <end position="283"/>
    </location>
</feature>
<feature type="domain" description="ABC transporter" evidence="1">
    <location>
        <begin position="7"/>
        <end position="244"/>
    </location>
</feature>
<feature type="binding site" evidence="1">
    <location>
        <begin position="41"/>
        <end position="48"/>
    </location>
    <ligand>
        <name>ATP</name>
        <dbReference type="ChEBI" id="CHEBI:30616"/>
    </ligand>
</feature>
<reference key="1">
    <citation type="journal article" date="2005" name="Proc. Natl. Acad. Sci. U.S.A.">
        <title>Complete genome sequence of the probiotic lactic acid bacterium Lactobacillus acidophilus NCFM.</title>
        <authorList>
            <person name="Altermann E."/>
            <person name="Russell W.M."/>
            <person name="Azcarate-Peril M.A."/>
            <person name="Barrangou R."/>
            <person name="Buck B.L."/>
            <person name="McAuliffe O."/>
            <person name="Souther N."/>
            <person name="Dobson A."/>
            <person name="Duong T."/>
            <person name="Callanan M."/>
            <person name="Lick S."/>
            <person name="Hamrick A."/>
            <person name="Cano R."/>
            <person name="Klaenhammer T.R."/>
        </authorList>
    </citation>
    <scope>NUCLEOTIDE SEQUENCE [LARGE SCALE GENOMIC DNA]</scope>
    <source>
        <strain>ATCC 700396 / NCK56 / N2 / NCFM</strain>
    </source>
</reference>
<proteinExistence type="inferred from homology"/>